<feature type="chain" id="PRO_0000393272" description="Fanconi-associated nuclease 1 homolog">
    <location>
        <begin position="1"/>
        <end position="1087"/>
    </location>
</feature>
<feature type="domain" description="VRR-NUC">
    <location>
        <begin position="961"/>
        <end position="1083"/>
    </location>
</feature>
<feature type="region of interest" description="Disordered" evidence="4">
    <location>
        <begin position="1"/>
        <end position="79"/>
    </location>
</feature>
<feature type="region of interest" description="Disordered" evidence="4">
    <location>
        <begin position="104"/>
        <end position="154"/>
    </location>
</feature>
<feature type="region of interest" description="Disordered" evidence="4">
    <location>
        <begin position="169"/>
        <end position="202"/>
    </location>
</feature>
<feature type="region of interest" description="Disordered" evidence="4">
    <location>
        <begin position="459"/>
        <end position="486"/>
    </location>
</feature>
<feature type="region of interest" description="Disordered" evidence="4">
    <location>
        <begin position="816"/>
        <end position="835"/>
    </location>
</feature>
<feature type="region of interest" description="Disordered" evidence="4">
    <location>
        <begin position="842"/>
        <end position="871"/>
    </location>
</feature>
<feature type="coiled-coil region" evidence="3">
    <location>
        <begin position="419"/>
        <end position="490"/>
    </location>
</feature>
<feature type="coiled-coil region" evidence="3">
    <location>
        <begin position="830"/>
        <end position="874"/>
    </location>
</feature>
<feature type="compositionally biased region" description="Low complexity" evidence="4">
    <location>
        <begin position="41"/>
        <end position="79"/>
    </location>
</feature>
<feature type="compositionally biased region" description="Polar residues" evidence="4">
    <location>
        <begin position="104"/>
        <end position="115"/>
    </location>
</feature>
<feature type="compositionally biased region" description="Low complexity" evidence="4">
    <location>
        <begin position="118"/>
        <end position="154"/>
    </location>
</feature>
<feature type="compositionally biased region" description="Low complexity" evidence="4">
    <location>
        <begin position="182"/>
        <end position="202"/>
    </location>
</feature>
<feature type="compositionally biased region" description="Low complexity" evidence="4">
    <location>
        <begin position="467"/>
        <end position="485"/>
    </location>
</feature>
<feature type="compositionally biased region" description="Acidic residues" evidence="4">
    <location>
        <begin position="848"/>
        <end position="871"/>
    </location>
</feature>
<feature type="binding site" evidence="1">
    <location>
        <position position="899"/>
    </location>
    <ligand>
        <name>Mn(2+)</name>
        <dbReference type="ChEBI" id="CHEBI:29035"/>
        <label>2</label>
    </ligand>
</feature>
<feature type="binding site" evidence="1">
    <location>
        <position position="1023"/>
    </location>
    <ligand>
        <name>Mn(2+)</name>
        <dbReference type="ChEBI" id="CHEBI:29035"/>
        <label>1</label>
    </ligand>
</feature>
<feature type="binding site" evidence="1">
    <location>
        <position position="1023"/>
    </location>
    <ligand>
        <name>Mn(2+)</name>
        <dbReference type="ChEBI" id="CHEBI:29035"/>
        <label>2</label>
    </ligand>
</feature>
<feature type="binding site" evidence="1">
    <location>
        <position position="1051"/>
    </location>
    <ligand>
        <name>Mn(2+)</name>
        <dbReference type="ChEBI" id="CHEBI:29035"/>
        <label>1</label>
    </ligand>
</feature>
<feature type="binding site" evidence="1">
    <location>
        <position position="1052"/>
    </location>
    <ligand>
        <name>Mn(2+)</name>
        <dbReference type="ChEBI" id="CHEBI:29035"/>
        <label>1</label>
    </ligand>
</feature>
<sequence length="1087" mass="125767">MKSNTKNSVKRKSPPPVNPNKKFPSFEGKQTSIKDFFFNDTTTPPKTPTQPIRFTQNNNKENDKSNNNNNNNNTITPIKKTTTTTTVVVESFDDSRNTNLIQQFQKASTPSSPQIPNKLPQQENQQQIPNTQQQQIKQLQQQQQQQQQESPNNLFKTIKTTTTTETFEEFLLSQPTTPPPSNTTTTTTTTSSSSPSSSNNITTIDDKNNLIKNNRYYLNDFLIVTETVYKRDKHLFINDEKDYIEGMIETLDRDSQHLFVRLYNRKGPWFQINELKSSNYQNEIKNIGAAIESLVEYGFLEYYSSDKHDYNEIANLLKIDQLKSIASSFSIPNSSGKETFLKVISGEPFKGQSTLFSPKPIYKKKVENLVGESIKIVTEVVELWRMIHHLYFYSWSTHDSKSMIVNNIMGIKYPEYTVWKSKVKKEVQQKEEEVEKEKEEILQNQLIQVKQESDVIDLTQNSSGSSNNNNNNNNNNNNNNNNNNNIKEYDIDLTENESIFPNRESLLKYENARKLEEKSINLYESGGDLVALESILQVCLDELGRSVSKKVKYSFALKFTVGWVYTRILSWSIDIFEKLRKYQQCIDFLMLLIESPYCRGKRGYWWQRMIINHKHLHRSDDALLIAERSLKEDPFLRSGDRLAIEKHLIQLSSPPRRWRIPAGLIQFSYKLKEPISTTIYREKVSNNQQGYKSKYLFLTPQIKINKIKKIIIKSSQSQNNQQKVQSSLSSQIQTQIQTQIQTQIQSSQIQIQSPIQSQSQSQNQTPIQSQINNNNNNILAISSQKSFDSILTTTSINNTQSSSQNIYIDEETSLEITSDDELFPPGQSYKIEKENQLQITNSVKKEEEQEEEEEEEEEGQGQEEEEEEEEIIEITHGTVEEVSLEHYSQNGGWEGIHCETSIFITLYVLYFWDIIFDSNVPHVFQSPFQNSPLDFGSDEFYFTRKEAIDNRIKRLEHSNYDDLLILLNQSWLHNGCEARGVNWKSTSLEQLSIISKCLGGKLIAFISRLLTEDFKSFSHGMPDLLLWKLNNNNDDDIDDKNNNNSSIKFVEVKGTGDRLRDQQRIWIDMLISFGCDVEVCLVKNKKN</sequence>
<accession>Q55FW8</accession>
<proteinExistence type="inferred from homology"/>
<dbReference type="EC" id="3.1.4.1" evidence="2"/>
<dbReference type="EMBL" id="AAFI02000003">
    <property type="protein sequence ID" value="EAL73411.1"/>
    <property type="molecule type" value="Genomic_DNA"/>
</dbReference>
<dbReference type="RefSeq" id="XP_647415.1">
    <property type="nucleotide sequence ID" value="XM_642323.1"/>
</dbReference>
<dbReference type="SMR" id="Q55FW8"/>
<dbReference type="FunCoup" id="Q55FW8">
    <property type="interactions" value="53"/>
</dbReference>
<dbReference type="STRING" id="44689.Q55FW8"/>
<dbReference type="PaxDb" id="44689-DDB0238616"/>
<dbReference type="EnsemblProtists" id="EAL73411">
    <property type="protein sequence ID" value="EAL73411"/>
    <property type="gene ID" value="DDB_G0267916"/>
</dbReference>
<dbReference type="GeneID" id="8616222"/>
<dbReference type="KEGG" id="ddi:DDB_G0267916"/>
<dbReference type="dictyBase" id="DDB_G0267916">
    <property type="gene designation" value="mtmr15"/>
</dbReference>
<dbReference type="VEuPathDB" id="AmoebaDB:DDB_G0267916"/>
<dbReference type="eggNOG" id="KOG2143">
    <property type="taxonomic scope" value="Eukaryota"/>
</dbReference>
<dbReference type="HOGENOM" id="CLU_285203_0_0_1"/>
<dbReference type="InParanoid" id="Q55FW8"/>
<dbReference type="OMA" id="HNGCEAR"/>
<dbReference type="PhylomeDB" id="Q55FW8"/>
<dbReference type="PRO" id="PR:Q55FW8"/>
<dbReference type="Proteomes" id="UP000002195">
    <property type="component" value="Chromosome 1"/>
</dbReference>
<dbReference type="GO" id="GO:0005634">
    <property type="term" value="C:nucleus"/>
    <property type="evidence" value="ECO:0000318"/>
    <property type="project" value="GO_Central"/>
</dbReference>
<dbReference type="GO" id="GO:0008409">
    <property type="term" value="F:5'-3' exonuclease activity"/>
    <property type="evidence" value="ECO:0000318"/>
    <property type="project" value="GO_Central"/>
</dbReference>
<dbReference type="GO" id="GO:0017108">
    <property type="term" value="F:5'-flap endonuclease activity"/>
    <property type="evidence" value="ECO:0000318"/>
    <property type="project" value="GO_Central"/>
</dbReference>
<dbReference type="GO" id="GO:0070336">
    <property type="term" value="F:flap-structured DNA binding"/>
    <property type="evidence" value="ECO:0000318"/>
    <property type="project" value="GO_Central"/>
</dbReference>
<dbReference type="GO" id="GO:0046872">
    <property type="term" value="F:metal ion binding"/>
    <property type="evidence" value="ECO:0007669"/>
    <property type="project" value="UniProtKB-KW"/>
</dbReference>
<dbReference type="GO" id="GO:0004528">
    <property type="term" value="F:phosphodiesterase I activity"/>
    <property type="evidence" value="ECO:0007669"/>
    <property type="project" value="UniProtKB-EC"/>
</dbReference>
<dbReference type="GO" id="GO:0036297">
    <property type="term" value="P:interstrand cross-link repair"/>
    <property type="evidence" value="ECO:0000318"/>
    <property type="project" value="GO_Central"/>
</dbReference>
<dbReference type="CDD" id="cd22326">
    <property type="entry name" value="FAN1-like"/>
    <property type="match status" value="1"/>
</dbReference>
<dbReference type="FunFam" id="3.40.1350.10:FF:000020">
    <property type="entry name" value="Fanconi-associated nuclease"/>
    <property type="match status" value="1"/>
</dbReference>
<dbReference type="Gene3D" id="3.40.1350.10">
    <property type="match status" value="1"/>
</dbReference>
<dbReference type="InterPro" id="IPR033315">
    <property type="entry name" value="Fan1-like"/>
</dbReference>
<dbReference type="InterPro" id="IPR049132">
    <property type="entry name" value="FAN1-like_euk"/>
</dbReference>
<dbReference type="InterPro" id="IPR049126">
    <property type="entry name" value="FAN1-like_TPR"/>
</dbReference>
<dbReference type="InterPro" id="IPR049125">
    <property type="entry name" value="FAN1-like_WH"/>
</dbReference>
<dbReference type="InterPro" id="IPR011856">
    <property type="entry name" value="tRNA_endonuc-like_dom_sf"/>
</dbReference>
<dbReference type="InterPro" id="IPR014883">
    <property type="entry name" value="VRR_NUC"/>
</dbReference>
<dbReference type="PANTHER" id="PTHR15749">
    <property type="entry name" value="FANCONI-ASSOCIATED NUCLEASE 1"/>
    <property type="match status" value="1"/>
</dbReference>
<dbReference type="PANTHER" id="PTHR15749:SF4">
    <property type="entry name" value="FANCONI-ASSOCIATED NUCLEASE 1"/>
    <property type="match status" value="1"/>
</dbReference>
<dbReference type="Pfam" id="PF21315">
    <property type="entry name" value="FAN1_HTH"/>
    <property type="match status" value="1"/>
</dbReference>
<dbReference type="Pfam" id="PF21170">
    <property type="entry name" value="FAN1_TPR"/>
    <property type="match status" value="1"/>
</dbReference>
<dbReference type="Pfam" id="PF08774">
    <property type="entry name" value="VRR_NUC"/>
    <property type="match status" value="1"/>
</dbReference>
<dbReference type="SMART" id="SM00990">
    <property type="entry name" value="VRR_NUC"/>
    <property type="match status" value="1"/>
</dbReference>
<reference key="1">
    <citation type="journal article" date="2005" name="Nature">
        <title>The genome of the social amoeba Dictyostelium discoideum.</title>
        <authorList>
            <person name="Eichinger L."/>
            <person name="Pachebat J.A."/>
            <person name="Gloeckner G."/>
            <person name="Rajandream M.A."/>
            <person name="Sucgang R."/>
            <person name="Berriman M."/>
            <person name="Song J."/>
            <person name="Olsen R."/>
            <person name="Szafranski K."/>
            <person name="Xu Q."/>
            <person name="Tunggal B."/>
            <person name="Kummerfeld S."/>
            <person name="Madera M."/>
            <person name="Konfortov B.A."/>
            <person name="Rivero F."/>
            <person name="Bankier A.T."/>
            <person name="Lehmann R."/>
            <person name="Hamlin N."/>
            <person name="Davies R."/>
            <person name="Gaudet P."/>
            <person name="Fey P."/>
            <person name="Pilcher K."/>
            <person name="Chen G."/>
            <person name="Saunders D."/>
            <person name="Sodergren E.J."/>
            <person name="Davis P."/>
            <person name="Kerhornou A."/>
            <person name="Nie X."/>
            <person name="Hall N."/>
            <person name="Anjard C."/>
            <person name="Hemphill L."/>
            <person name="Bason N."/>
            <person name="Farbrother P."/>
            <person name="Desany B."/>
            <person name="Just E."/>
            <person name="Morio T."/>
            <person name="Rost R."/>
            <person name="Churcher C.M."/>
            <person name="Cooper J."/>
            <person name="Haydock S."/>
            <person name="van Driessche N."/>
            <person name="Cronin A."/>
            <person name="Goodhead I."/>
            <person name="Muzny D.M."/>
            <person name="Mourier T."/>
            <person name="Pain A."/>
            <person name="Lu M."/>
            <person name="Harper D."/>
            <person name="Lindsay R."/>
            <person name="Hauser H."/>
            <person name="James K.D."/>
            <person name="Quiles M."/>
            <person name="Madan Babu M."/>
            <person name="Saito T."/>
            <person name="Buchrieser C."/>
            <person name="Wardroper A."/>
            <person name="Felder M."/>
            <person name="Thangavelu M."/>
            <person name="Johnson D."/>
            <person name="Knights A."/>
            <person name="Loulseged H."/>
            <person name="Mungall K.L."/>
            <person name="Oliver K."/>
            <person name="Price C."/>
            <person name="Quail M.A."/>
            <person name="Urushihara H."/>
            <person name="Hernandez J."/>
            <person name="Rabbinowitsch E."/>
            <person name="Steffen D."/>
            <person name="Sanders M."/>
            <person name="Ma J."/>
            <person name="Kohara Y."/>
            <person name="Sharp S."/>
            <person name="Simmonds M.N."/>
            <person name="Spiegler S."/>
            <person name="Tivey A."/>
            <person name="Sugano S."/>
            <person name="White B."/>
            <person name="Walker D."/>
            <person name="Woodward J.R."/>
            <person name="Winckler T."/>
            <person name="Tanaka Y."/>
            <person name="Shaulsky G."/>
            <person name="Schleicher M."/>
            <person name="Weinstock G.M."/>
            <person name="Rosenthal A."/>
            <person name="Cox E.C."/>
            <person name="Chisholm R.L."/>
            <person name="Gibbs R.A."/>
            <person name="Loomis W.F."/>
            <person name="Platzer M."/>
            <person name="Kay R.R."/>
            <person name="Williams J.G."/>
            <person name="Dear P.H."/>
            <person name="Noegel A.A."/>
            <person name="Barrell B.G."/>
            <person name="Kuspa A."/>
        </authorList>
    </citation>
    <scope>NUCLEOTIDE SEQUENCE [LARGE SCALE GENOMIC DNA]</scope>
    <source>
        <strain>AX4</strain>
    </source>
</reference>
<gene>
    <name type="primary">mtmr15</name>
    <name type="ORF">DDB_G0267916</name>
</gene>
<name>FAN1_DICDI</name>
<comment type="function">
    <text evidence="2">Nuclease required for the repair of DNA interstrand cross-links (ICL). Acts as a 5'-3' exonuclease that anchors at a cut end of DNA and cleaves DNA successively at every third nucleotide, allowing to excise an ICL from one strand through flanking incisions.</text>
</comment>
<comment type="catalytic activity">
    <reaction evidence="2">
        <text>Hydrolytically removes 5'-nucleotides successively from the 3'-hydroxy termini of 3'-hydroxy-terminated oligonucleotides.</text>
        <dbReference type="EC" id="3.1.4.1"/>
    </reaction>
</comment>
<comment type="cofactor">
    <cofactor evidence="1">
        <name>Mn(2+)</name>
        <dbReference type="ChEBI" id="CHEBI:29035"/>
    </cofactor>
    <cofactor evidence="1">
        <name>Mg(2+)</name>
        <dbReference type="ChEBI" id="CHEBI:18420"/>
    </cofactor>
    <text evidence="1">Binds 2 magnesium or manganese ions per subunit.</text>
</comment>
<comment type="similarity">
    <text evidence="5">Belongs to the FAN1 family.</text>
</comment>
<keyword id="KW-0175">Coiled coil</keyword>
<keyword id="KW-0378">Hydrolase</keyword>
<keyword id="KW-0460">Magnesium</keyword>
<keyword id="KW-0464">Manganese</keyword>
<keyword id="KW-0479">Metal-binding</keyword>
<keyword id="KW-0540">Nuclease</keyword>
<keyword id="KW-1185">Reference proteome</keyword>
<evidence type="ECO:0000250" key="1">
    <source>
        <dbReference type="UniProtKB" id="Q9I2N0"/>
    </source>
</evidence>
<evidence type="ECO:0000250" key="2">
    <source>
        <dbReference type="UniProtKB" id="Q9Y2M0"/>
    </source>
</evidence>
<evidence type="ECO:0000255" key="3"/>
<evidence type="ECO:0000256" key="4">
    <source>
        <dbReference type="SAM" id="MobiDB-lite"/>
    </source>
</evidence>
<evidence type="ECO:0000305" key="5"/>
<protein>
    <recommendedName>
        <fullName evidence="5">Fanconi-associated nuclease 1 homolog</fullName>
        <ecNumber evidence="2">3.1.4.1</ecNumber>
    </recommendedName>
    <alternativeName>
        <fullName>Protein MTMR15 homolog</fullName>
    </alternativeName>
</protein>
<organism>
    <name type="scientific">Dictyostelium discoideum</name>
    <name type="common">Social amoeba</name>
    <dbReference type="NCBI Taxonomy" id="44689"/>
    <lineage>
        <taxon>Eukaryota</taxon>
        <taxon>Amoebozoa</taxon>
        <taxon>Evosea</taxon>
        <taxon>Eumycetozoa</taxon>
        <taxon>Dictyostelia</taxon>
        <taxon>Dictyosteliales</taxon>
        <taxon>Dictyosteliaceae</taxon>
        <taxon>Dictyostelium</taxon>
    </lineage>
</organism>